<accession>O28377</accession>
<organism>
    <name type="scientific">Archaeoglobus fulgidus (strain ATCC 49558 / DSM 4304 / JCM 9628 / NBRC 100126 / VC-16)</name>
    <dbReference type="NCBI Taxonomy" id="224325"/>
    <lineage>
        <taxon>Archaea</taxon>
        <taxon>Methanobacteriati</taxon>
        <taxon>Methanobacteriota</taxon>
        <taxon>Archaeoglobi</taxon>
        <taxon>Archaeoglobales</taxon>
        <taxon>Archaeoglobaceae</taxon>
        <taxon>Archaeoglobus</taxon>
    </lineage>
</organism>
<reference key="1">
    <citation type="journal article" date="1997" name="Nature">
        <title>The complete genome sequence of the hyperthermophilic, sulphate-reducing archaeon Archaeoglobus fulgidus.</title>
        <authorList>
            <person name="Klenk H.-P."/>
            <person name="Clayton R.A."/>
            <person name="Tomb J.-F."/>
            <person name="White O."/>
            <person name="Nelson K.E."/>
            <person name="Ketchum K.A."/>
            <person name="Dodson R.J."/>
            <person name="Gwinn M.L."/>
            <person name="Hickey E.K."/>
            <person name="Peterson J.D."/>
            <person name="Richardson D.L."/>
            <person name="Kerlavage A.R."/>
            <person name="Graham D.E."/>
            <person name="Kyrpides N.C."/>
            <person name="Fleischmann R.D."/>
            <person name="Quackenbush J."/>
            <person name="Lee N.H."/>
            <person name="Sutton G.G."/>
            <person name="Gill S.R."/>
            <person name="Kirkness E.F."/>
            <person name="Dougherty B.A."/>
            <person name="McKenney K."/>
            <person name="Adams M.D."/>
            <person name="Loftus B.J."/>
            <person name="Peterson S.N."/>
            <person name="Reich C.I."/>
            <person name="McNeil L.K."/>
            <person name="Badger J.H."/>
            <person name="Glodek A."/>
            <person name="Zhou L."/>
            <person name="Overbeek R."/>
            <person name="Gocayne J.D."/>
            <person name="Weidman J.F."/>
            <person name="McDonald L.A."/>
            <person name="Utterback T.R."/>
            <person name="Cotton M.D."/>
            <person name="Spriggs T."/>
            <person name="Artiach P."/>
            <person name="Kaine B.P."/>
            <person name="Sykes S.M."/>
            <person name="Sadow P.W."/>
            <person name="D'Andrea K.P."/>
            <person name="Bowman C."/>
            <person name="Fujii C."/>
            <person name="Garland S.A."/>
            <person name="Mason T.M."/>
            <person name="Olsen G.J."/>
            <person name="Fraser C.M."/>
            <person name="Smith H.O."/>
            <person name="Woese C.R."/>
            <person name="Venter J.C."/>
        </authorList>
    </citation>
    <scope>NUCLEOTIDE SEQUENCE [LARGE SCALE GENOMIC DNA]</scope>
    <source>
        <strain>ATCC 49558 / DSM 4304 / JCM 9628 / NBRC 100126 / VC-16</strain>
    </source>
</reference>
<gene>
    <name evidence="2" type="primary">secY</name>
    <name type="ordered locus">AF_1902</name>
</gene>
<evidence type="ECO:0000250" key="1"/>
<evidence type="ECO:0000255" key="2">
    <source>
        <dbReference type="HAMAP-Rule" id="MF_01465"/>
    </source>
</evidence>
<name>SECY_ARCFU</name>
<sequence length="493" mass="53351">MDSVIRALQPYFERIPSVERPKGHVHFREKFGWTAAILLLYFILSNVPVFGLSPESIDIFAAYRALFAGSTGSIIALGIGPIVTASIILQLLVGAGIIKLDLTNPEDRAAYQDFQRFLVFVMIAVEAIPQIAGGLLKPDLNLAAQLGVSPGIISFLIFIQLFIGGVLIVYMDEVVSKWGIGSGVSLFILAGIAQSIVVGLFNWVIPPNSAMPAGIIPRWIWIAQNYPLDQLFTGSGLAFLLIQGGILALITTAAIILLVVFFEGTRVEIPLAHAVARGARGRFPIKLIYASVLPMIFVRALQANVVALGQVLHARGVTIFGEFVNGKAVSGLMFFLQPVSSPYDWIPSLVKSQGAAFAAIPDWMIYLHLLIDALILVVGGIIFAWFWVETSGMDARTVASQIAKSGMQVPGFRKSPQVLERVLSRYIPKVTILGGAIIGILTLVANMLGTIGNVSGTGLLLAVSIAYRFYEDLAKEQLTEMHPLIRRMLGEEA</sequence>
<proteinExistence type="inferred from homology"/>
<comment type="function">
    <text evidence="2">The central subunit of the protein translocation channel SecYEG. Consists of two halves formed by TMs 1-5 and 6-10. These two domains form a lateral gate at the front which open onto the bilayer between TMs 2 and 7, and are clamped together by SecE at the back. The channel is closed by both a pore ring composed of hydrophobic SecY resides and a short helix (helix 2A) on the extracellular side of the membrane which forms a plug. The plug probably moves laterally to allow the channel to open. The ring and the pore may move independently.</text>
</comment>
<comment type="subunit">
    <text evidence="2">Component of the Sec protein translocase complex. Heterotrimer consisting of alpha (SecY), beta (SecG) and gamma (SecE) subunits. The heterotrimers can form oligomers, although 1 heterotrimer is thought to be able to translocate proteins. Interacts with the ribosome. May interact with SecDF, and other proteins may be involved.</text>
</comment>
<comment type="subcellular location">
    <subcellularLocation>
        <location evidence="2">Cell membrane</location>
        <topology evidence="2">Multi-pass membrane protein</topology>
    </subcellularLocation>
</comment>
<comment type="similarity">
    <text evidence="2">Belongs to the SecY/SEC61-alpha family.</text>
</comment>
<protein>
    <recommendedName>
        <fullName evidence="2">Protein translocase subunit SecY</fullName>
    </recommendedName>
    <alternativeName>
        <fullName evidence="2">Protein transport protein SEC61 subunit alpha homolog</fullName>
    </alternativeName>
</protein>
<dbReference type="EMBL" id="AE000782">
    <property type="protein sequence ID" value="AAB89347.1"/>
    <property type="molecule type" value="Genomic_DNA"/>
</dbReference>
<dbReference type="PIR" id="E69487">
    <property type="entry name" value="E69487"/>
</dbReference>
<dbReference type="RefSeq" id="WP_010879395.1">
    <property type="nucleotide sequence ID" value="NC_000917.1"/>
</dbReference>
<dbReference type="SMR" id="O28377"/>
<dbReference type="STRING" id="224325.AF_1902"/>
<dbReference type="PaxDb" id="224325-AF_1902"/>
<dbReference type="EnsemblBacteria" id="AAB89347">
    <property type="protein sequence ID" value="AAB89347"/>
    <property type="gene ID" value="AF_1902"/>
</dbReference>
<dbReference type="GeneID" id="24795646"/>
<dbReference type="KEGG" id="afu:AF_1902"/>
<dbReference type="eggNOG" id="arCOG04169">
    <property type="taxonomic scope" value="Archaea"/>
</dbReference>
<dbReference type="HOGENOM" id="CLU_031763_3_0_2"/>
<dbReference type="OrthoDB" id="371914at2157"/>
<dbReference type="PhylomeDB" id="O28377"/>
<dbReference type="Proteomes" id="UP000002199">
    <property type="component" value="Chromosome"/>
</dbReference>
<dbReference type="GO" id="GO:0005886">
    <property type="term" value="C:plasma membrane"/>
    <property type="evidence" value="ECO:0007669"/>
    <property type="project" value="UniProtKB-SubCell"/>
</dbReference>
<dbReference type="GO" id="GO:0065002">
    <property type="term" value="P:intracellular protein transmembrane transport"/>
    <property type="evidence" value="ECO:0007669"/>
    <property type="project" value="UniProtKB-UniRule"/>
</dbReference>
<dbReference type="GO" id="GO:0006605">
    <property type="term" value="P:protein targeting"/>
    <property type="evidence" value="ECO:0007669"/>
    <property type="project" value="UniProtKB-UniRule"/>
</dbReference>
<dbReference type="Gene3D" id="1.10.3370.10">
    <property type="entry name" value="SecY subunit domain"/>
    <property type="match status" value="1"/>
</dbReference>
<dbReference type="HAMAP" id="MF_01465">
    <property type="entry name" value="SecY"/>
    <property type="match status" value="1"/>
</dbReference>
<dbReference type="InterPro" id="IPR026593">
    <property type="entry name" value="SecY"/>
</dbReference>
<dbReference type="InterPro" id="IPR002208">
    <property type="entry name" value="SecY/SEC61-alpha"/>
</dbReference>
<dbReference type="InterPro" id="IPR030659">
    <property type="entry name" value="SecY_CS"/>
</dbReference>
<dbReference type="InterPro" id="IPR023201">
    <property type="entry name" value="SecY_dom_sf"/>
</dbReference>
<dbReference type="InterPro" id="IPR019561">
    <property type="entry name" value="Translocon_Sec61/SecY_plug_dom"/>
</dbReference>
<dbReference type="NCBIfam" id="TIGR00967">
    <property type="entry name" value="3a0501s007"/>
    <property type="match status" value="1"/>
</dbReference>
<dbReference type="NCBIfam" id="NF006341">
    <property type="entry name" value="PRK08568.1-5"/>
    <property type="match status" value="1"/>
</dbReference>
<dbReference type="PANTHER" id="PTHR10906">
    <property type="entry name" value="SECY/SEC61-ALPHA FAMILY MEMBER"/>
    <property type="match status" value="1"/>
</dbReference>
<dbReference type="Pfam" id="PF10559">
    <property type="entry name" value="Plug_translocon"/>
    <property type="match status" value="1"/>
</dbReference>
<dbReference type="Pfam" id="PF00344">
    <property type="entry name" value="SecY"/>
    <property type="match status" value="1"/>
</dbReference>
<dbReference type="PIRSF" id="PIRSF004557">
    <property type="entry name" value="SecY"/>
    <property type="match status" value="1"/>
</dbReference>
<dbReference type="PRINTS" id="PR00303">
    <property type="entry name" value="SECYTRNLCASE"/>
</dbReference>
<dbReference type="SUPFAM" id="SSF103491">
    <property type="entry name" value="Preprotein translocase SecY subunit"/>
    <property type="match status" value="1"/>
</dbReference>
<dbReference type="PROSITE" id="PS00755">
    <property type="entry name" value="SECY_1"/>
    <property type="match status" value="1"/>
</dbReference>
<dbReference type="PROSITE" id="PS00756">
    <property type="entry name" value="SECY_2"/>
    <property type="match status" value="1"/>
</dbReference>
<feature type="chain" id="PRO_0000131760" description="Protein translocase subunit SecY">
    <location>
        <begin position="1"/>
        <end position="493"/>
    </location>
</feature>
<feature type="topological domain" description="Cytoplasmic" evidence="1">
    <location>
        <begin position="1"/>
        <end position="21"/>
    </location>
</feature>
<feature type="transmembrane region" description="Helical; Name=Helix 1" evidence="2">
    <location>
        <begin position="22"/>
        <end position="48"/>
    </location>
</feature>
<feature type="topological domain" description="Extracellular" evidence="1">
    <location>
        <begin position="49"/>
        <end position="59"/>
    </location>
</feature>
<feature type="transmembrane region" description="Discontinuously helical; Name=Helix 2" evidence="1">
    <location>
        <begin position="60"/>
        <end position="88"/>
    </location>
</feature>
<feature type="intramembrane region" description="Helical; Name=Helix 2A" evidence="1">
    <location>
        <begin position="60"/>
        <end position="67"/>
    </location>
</feature>
<feature type="intramembrane region" evidence="1">
    <location>
        <begin position="68"/>
        <end position="79"/>
    </location>
</feature>
<feature type="intramembrane region" description="Helical; Name=Helix 2B" evidence="1">
    <location>
        <begin position="80"/>
        <end position="88"/>
    </location>
</feature>
<feature type="topological domain" description="Cytoplasmic" evidence="1">
    <location>
        <begin position="89"/>
        <end position="109"/>
    </location>
</feature>
<feature type="transmembrane region" description="Helical; Name=Helix 3" evidence="2">
    <location>
        <begin position="110"/>
        <end position="134"/>
    </location>
</feature>
<feature type="topological domain" description="Extracellular" evidence="1">
    <location>
        <begin position="135"/>
        <end position="151"/>
    </location>
</feature>
<feature type="transmembrane region" description="Helical; Name=Helix 4" evidence="2">
    <location>
        <begin position="152"/>
        <end position="176"/>
    </location>
</feature>
<feature type="topological domain" description="Cytoplasmic" evidence="1">
    <location>
        <begin position="177"/>
        <end position="182"/>
    </location>
</feature>
<feature type="transmembrane region" description="Helical; Name=Helix 5" evidence="2">
    <location>
        <begin position="183"/>
        <end position="201"/>
    </location>
</feature>
<feature type="topological domain" description="Extracellular" evidence="1">
    <location>
        <begin position="202"/>
        <end position="244"/>
    </location>
</feature>
<feature type="transmembrane region" description="Helical; Name=Helix 6" evidence="2">
    <location>
        <begin position="245"/>
        <end position="266"/>
    </location>
</feature>
<feature type="topological domain" description="Cytoplasmic" evidence="1">
    <location>
        <begin position="267"/>
        <end position="291"/>
    </location>
</feature>
<feature type="transmembrane region" description="Helical; Name=Helix 7" evidence="2">
    <location>
        <begin position="292"/>
        <end position="313"/>
    </location>
</feature>
<feature type="topological domain" description="Extracellular" evidence="1">
    <location>
        <begin position="314"/>
        <end position="367"/>
    </location>
</feature>
<feature type="transmembrane region" description="Helical; Name=Helix 8" evidence="2">
    <location>
        <begin position="368"/>
        <end position="387"/>
    </location>
</feature>
<feature type="topological domain" description="Cytoplasmic" evidence="1">
    <location>
        <begin position="388"/>
        <end position="430"/>
    </location>
</feature>
<feature type="transmembrane region" description="Helical; Name=Helix 9" evidence="2">
    <location>
        <begin position="431"/>
        <end position="449"/>
    </location>
</feature>
<feature type="topological domain" description="Extracellular" evidence="1">
    <location>
        <begin position="450"/>
        <end position="454"/>
    </location>
</feature>
<feature type="transmembrane region" description="Helical; Name=Helix 10" evidence="2">
    <location>
        <begin position="455"/>
        <end position="469"/>
    </location>
</feature>
<feature type="topological domain" description="Cytoplasmic" evidence="1">
    <location>
        <begin position="470"/>
        <end position="493"/>
    </location>
</feature>
<keyword id="KW-1003">Cell membrane</keyword>
<keyword id="KW-0472">Membrane</keyword>
<keyword id="KW-0653">Protein transport</keyword>
<keyword id="KW-1185">Reference proteome</keyword>
<keyword id="KW-0811">Translocation</keyword>
<keyword id="KW-0812">Transmembrane</keyword>
<keyword id="KW-1133">Transmembrane helix</keyword>
<keyword id="KW-0813">Transport</keyword>